<proteinExistence type="inferred from homology"/>
<evidence type="ECO:0000250" key="1">
    <source>
        <dbReference type="UniProtKB" id="Q76FB0"/>
    </source>
</evidence>
<evidence type="ECO:0000255" key="2">
    <source>
        <dbReference type="PROSITE-ProRule" id="PRU00433"/>
    </source>
</evidence>
<evidence type="ECO:0000303" key="3">
    <source ref="1"/>
</evidence>
<evidence type="ECO:0000305" key="4"/>
<reference key="1">
    <citation type="journal article" date="1998" name="Eur. J. Phycol.">
        <title>The petF region of the chloroplast genome from the diatom Thalassiosira weissflogii: sequence, organization and phylogeny.</title>
        <authorList>
            <person name="Gueneau P."/>
            <person name="Morel F."/>
            <person name="Laroche J."/>
            <person name="Erdner D."/>
        </authorList>
    </citation>
    <scope>NUCLEOTIDE SEQUENCE [GENOMIC DNA]</scope>
</reference>
<sequence length="80" mass="8908">ALSLATPRRDNINALVDYLKNPTSYDGLDSIAEIHPSIKSADIYPRMRSLTDDDLYAIAGHIMLQPKVVSEKWGGGKIYF</sequence>
<comment type="function">
    <text evidence="1">One of the extrinsic, lumenal subunits of photosystem II (PSII). PSII is a light-driven water plastoquinone oxidoreductase, using light energy to abstract electrons from H(2)O, generating a proton gradient subsequently used for ATP formation. The extrinsic proteins stabilize the structure of photosystem II oxygen-evolving complex (OEC), the ion environment of oxygen evolution and protect the OEC against heat-induced inactivation.</text>
</comment>
<comment type="cofactor">
    <cofactor evidence="1">
        <name>heme</name>
        <dbReference type="ChEBI" id="CHEBI:30413"/>
    </cofactor>
    <text evidence="1">Binds 1 heme group covalently per subunit.</text>
</comment>
<comment type="subunit">
    <text evidence="1">PSII is composed of 1 copy each of membrane proteins PsbA, PsbB, PsbC, PsbD, PsbE, PsbF, PsbH, PsbI, PsbJ, PsbK, PsbL, PsbM, PsbT, PsbY, PsbZ, Psb30/Ycf12, at least 3 peripheral proteins of the oxygen-evolving complex and a large number of cofactors. It forms dimeric complexes.</text>
</comment>
<comment type="subcellular location">
    <subcellularLocation>
        <location evidence="1">Plastid</location>
        <location evidence="1">Chloroplast thylakoid membrane</location>
        <topology evidence="1">Peripheral membrane protein</topology>
        <orientation evidence="1">Lumenal side</orientation>
    </subcellularLocation>
    <text evidence="1">Associated with photosystem II at the lumenal side of the thylakoid membrane.</text>
</comment>
<comment type="similarity">
    <text evidence="4">Belongs to the cytochrome c family. PsbV subfamily.</text>
</comment>
<keyword id="KW-0150">Chloroplast</keyword>
<keyword id="KW-0249">Electron transport</keyword>
<keyword id="KW-0349">Heme</keyword>
<keyword id="KW-0408">Iron</keyword>
<keyword id="KW-0472">Membrane</keyword>
<keyword id="KW-0479">Metal-binding</keyword>
<keyword id="KW-0602">Photosynthesis</keyword>
<keyword id="KW-0604">Photosystem II</keyword>
<keyword id="KW-0934">Plastid</keyword>
<keyword id="KW-0793">Thylakoid</keyword>
<keyword id="KW-0813">Transport</keyword>
<dbReference type="EMBL" id="AF049491">
    <property type="protein sequence ID" value="AAD12750.1"/>
    <property type="molecule type" value="Genomic_DNA"/>
</dbReference>
<dbReference type="SMR" id="O98448"/>
<dbReference type="GO" id="GO:0009535">
    <property type="term" value="C:chloroplast thylakoid membrane"/>
    <property type="evidence" value="ECO:0007669"/>
    <property type="project" value="UniProtKB-SubCell"/>
</dbReference>
<dbReference type="GO" id="GO:0009523">
    <property type="term" value="C:photosystem II"/>
    <property type="evidence" value="ECO:0007669"/>
    <property type="project" value="UniProtKB-KW"/>
</dbReference>
<dbReference type="GO" id="GO:0009055">
    <property type="term" value="F:electron transfer activity"/>
    <property type="evidence" value="ECO:0007669"/>
    <property type="project" value="InterPro"/>
</dbReference>
<dbReference type="GO" id="GO:0020037">
    <property type="term" value="F:heme binding"/>
    <property type="evidence" value="ECO:0007669"/>
    <property type="project" value="InterPro"/>
</dbReference>
<dbReference type="GO" id="GO:0046872">
    <property type="term" value="F:metal ion binding"/>
    <property type="evidence" value="ECO:0007669"/>
    <property type="project" value="UniProtKB-KW"/>
</dbReference>
<dbReference type="GO" id="GO:0015979">
    <property type="term" value="P:photosynthesis"/>
    <property type="evidence" value="ECO:0007669"/>
    <property type="project" value="UniProtKB-KW"/>
</dbReference>
<dbReference type="Gene3D" id="1.10.760.10">
    <property type="entry name" value="Cytochrome c-like domain"/>
    <property type="match status" value="1"/>
</dbReference>
<dbReference type="InterPro" id="IPR036909">
    <property type="entry name" value="Cyt_c-like_dom_sf"/>
</dbReference>
<dbReference type="InterPro" id="IPR029490">
    <property type="entry name" value="Cytochrom_C550"/>
</dbReference>
<dbReference type="Pfam" id="PF14495">
    <property type="entry name" value="Cytochrom_C550"/>
    <property type="match status" value="1"/>
</dbReference>
<dbReference type="SUPFAM" id="SSF46626">
    <property type="entry name" value="Cytochrome c"/>
    <property type="match status" value="1"/>
</dbReference>
<organism>
    <name type="scientific">Thalassiosira weissflogii</name>
    <name type="common">Marine diatom</name>
    <dbReference type="NCBI Taxonomy" id="1577725"/>
    <lineage>
        <taxon>Eukaryota</taxon>
        <taxon>Sar</taxon>
        <taxon>Stramenopiles</taxon>
        <taxon>Ochrophyta</taxon>
        <taxon>Bacillariophyta</taxon>
        <taxon>Coscinodiscophyceae</taxon>
        <taxon>Thalassiosirophycidae</taxon>
        <taxon>Thalassiosirales</taxon>
        <taxon>Thalassiosiraceae</taxon>
        <taxon>Conticribra</taxon>
    </lineage>
</organism>
<geneLocation type="chloroplast"/>
<protein>
    <recommendedName>
        <fullName evidence="4">Photosystem II extrinsic protein V</fullName>
        <shortName evidence="4">PsbV</shortName>
    </recommendedName>
    <alternativeName>
        <fullName evidence="3">Cytochrome c-550</fullName>
    </alternativeName>
    <alternativeName>
        <fullName>Cytochrome c550</fullName>
    </alternativeName>
</protein>
<feature type="chain" id="PRO_0000108379" description="Photosystem II extrinsic protein V">
    <location>
        <begin position="1" status="less than"/>
        <end position="80"/>
    </location>
</feature>
<feature type="binding site" description="axial binding residue" evidence="2">
    <location>
        <position position="47"/>
    </location>
    <ligand>
        <name>heme</name>
        <dbReference type="ChEBI" id="CHEBI:30413"/>
    </ligand>
    <ligandPart>
        <name>Fe</name>
        <dbReference type="ChEBI" id="CHEBI:18248"/>
    </ligandPart>
</feature>
<feature type="non-terminal residue">
    <location>
        <position position="1"/>
    </location>
</feature>
<accession>O98448</accession>
<gene>
    <name evidence="3" type="primary">psbV</name>
</gene>
<name>CY550_THAWE</name>